<proteinExistence type="evidence at transcript level"/>
<dbReference type="EMBL" id="AF152021">
    <property type="protein sequence ID" value="AAD55758.1"/>
    <property type="molecule type" value="mRNA"/>
</dbReference>
<dbReference type="EMBL" id="AF247680">
    <property type="protein sequence ID" value="AAF77183.1"/>
    <property type="molecule type" value="Genomic_DNA"/>
</dbReference>
<dbReference type="RefSeq" id="NP_999367.1">
    <property type="nucleotide sequence ID" value="NM_214202.1"/>
</dbReference>
<dbReference type="SMR" id="Q9TU45"/>
<dbReference type="FunCoup" id="Q9TU45">
    <property type="interactions" value="690"/>
</dbReference>
<dbReference type="STRING" id="9823.ENSSSCP00000003143"/>
<dbReference type="PaxDb" id="9823-ENSSSCP00000003143"/>
<dbReference type="Ensembl" id="ENSSSCT00000003224.5">
    <property type="protein sequence ID" value="ENSSSCP00000003143.4"/>
    <property type="gene ID" value="ENSSSCG00000002919.5"/>
</dbReference>
<dbReference type="Ensembl" id="ENSSSCT00065092514.1">
    <property type="protein sequence ID" value="ENSSSCP00065040488.1"/>
    <property type="gene ID" value="ENSSSCG00065067355.1"/>
</dbReference>
<dbReference type="Ensembl" id="ENSSSCT00065092831.1">
    <property type="protein sequence ID" value="ENSSSCP00065040621.1"/>
    <property type="gene ID" value="ENSSSCG00065067610.1"/>
</dbReference>
<dbReference type="Ensembl" id="ENSSSCT00105064576">
    <property type="protein sequence ID" value="ENSSSCP00105045964"/>
    <property type="gene ID" value="ENSSSCG00105033838"/>
</dbReference>
<dbReference type="Ensembl" id="ENSSSCT00115024928">
    <property type="protein sequence ID" value="ENSSSCP00115023641"/>
    <property type="gene ID" value="ENSSSCG00115014345"/>
</dbReference>
<dbReference type="GeneID" id="397405"/>
<dbReference type="KEGG" id="ssc:397405"/>
<dbReference type="CTD" id="7305"/>
<dbReference type="VGNC" id="VGNC:94619">
    <property type="gene designation" value="TYROBP"/>
</dbReference>
<dbReference type="eggNOG" id="ENOG502SCVI">
    <property type="taxonomic scope" value="Eukaryota"/>
</dbReference>
<dbReference type="GeneTree" id="ENSGT00390000016786"/>
<dbReference type="HOGENOM" id="CLU_141718_0_0_1"/>
<dbReference type="InParanoid" id="Q9TU45"/>
<dbReference type="OMA" id="QRQPYYK"/>
<dbReference type="OrthoDB" id="9901873at2759"/>
<dbReference type="TreeFam" id="TF336898"/>
<dbReference type="Reactome" id="R-SSC-198933">
    <property type="pathway name" value="Immunoregulatory interactions between a Lymphoid and a non-Lymphoid cell"/>
</dbReference>
<dbReference type="Reactome" id="R-SSC-2172127">
    <property type="pathway name" value="DAP12 interactions"/>
</dbReference>
<dbReference type="Reactome" id="R-SSC-2424491">
    <property type="pathway name" value="DAP12 signaling"/>
</dbReference>
<dbReference type="Reactome" id="R-SSC-391160">
    <property type="pathway name" value="Signal regulatory protein family interactions"/>
</dbReference>
<dbReference type="Reactome" id="R-SSC-416700">
    <property type="pathway name" value="Other semaphorin interactions"/>
</dbReference>
<dbReference type="Reactome" id="R-SSC-6798695">
    <property type="pathway name" value="Neutrophil degranulation"/>
</dbReference>
<dbReference type="Proteomes" id="UP000008227">
    <property type="component" value="Chromosome 6"/>
</dbReference>
<dbReference type="Proteomes" id="UP000314985">
    <property type="component" value="Unplaced"/>
</dbReference>
<dbReference type="Proteomes" id="UP000694570">
    <property type="component" value="Unplaced"/>
</dbReference>
<dbReference type="Proteomes" id="UP000694571">
    <property type="component" value="Unplaced"/>
</dbReference>
<dbReference type="Proteomes" id="UP000694720">
    <property type="component" value="Unplaced"/>
</dbReference>
<dbReference type="Proteomes" id="UP000694722">
    <property type="component" value="Unplaced"/>
</dbReference>
<dbReference type="Proteomes" id="UP000694723">
    <property type="component" value="Unplaced"/>
</dbReference>
<dbReference type="Proteomes" id="UP000694724">
    <property type="component" value="Unplaced"/>
</dbReference>
<dbReference type="Proteomes" id="UP000694725">
    <property type="component" value="Unplaced"/>
</dbReference>
<dbReference type="Proteomes" id="UP000694726">
    <property type="component" value="Unplaced"/>
</dbReference>
<dbReference type="Proteomes" id="UP000694727">
    <property type="component" value="Unplaced"/>
</dbReference>
<dbReference type="Proteomes" id="UP000694728">
    <property type="component" value="Unplaced"/>
</dbReference>
<dbReference type="GO" id="GO:0009986">
    <property type="term" value="C:cell surface"/>
    <property type="evidence" value="ECO:0000250"/>
    <property type="project" value="UniProtKB"/>
</dbReference>
<dbReference type="GO" id="GO:0005886">
    <property type="term" value="C:plasma membrane"/>
    <property type="evidence" value="ECO:0000250"/>
    <property type="project" value="UniProtKB"/>
</dbReference>
<dbReference type="GO" id="GO:0046872">
    <property type="term" value="F:metal ion binding"/>
    <property type="evidence" value="ECO:0007669"/>
    <property type="project" value="UniProtKB-KW"/>
</dbReference>
<dbReference type="GO" id="GO:0042803">
    <property type="term" value="F:protein homodimerization activity"/>
    <property type="evidence" value="ECO:0000250"/>
    <property type="project" value="UniProtKB"/>
</dbReference>
<dbReference type="GO" id="GO:0030674">
    <property type="term" value="F:protein-macromolecule adaptor activity"/>
    <property type="evidence" value="ECO:0007669"/>
    <property type="project" value="Ensembl"/>
</dbReference>
<dbReference type="GO" id="GO:0005102">
    <property type="term" value="F:signaling receptor binding"/>
    <property type="evidence" value="ECO:0007669"/>
    <property type="project" value="Ensembl"/>
</dbReference>
<dbReference type="GO" id="GO:0030036">
    <property type="term" value="P:actin cytoskeleton organization"/>
    <property type="evidence" value="ECO:0007669"/>
    <property type="project" value="Ensembl"/>
</dbReference>
<dbReference type="GO" id="GO:0097242">
    <property type="term" value="P:amyloid-beta clearance"/>
    <property type="evidence" value="ECO:0007669"/>
    <property type="project" value="Ensembl"/>
</dbReference>
<dbReference type="GO" id="GO:0043277">
    <property type="term" value="P:apoptotic cell clearance"/>
    <property type="evidence" value="ECO:0000250"/>
    <property type="project" value="UniProtKB"/>
</dbReference>
<dbReference type="GO" id="GO:1904646">
    <property type="term" value="P:cellular response to amyloid-beta"/>
    <property type="evidence" value="ECO:0007669"/>
    <property type="project" value="Ensembl"/>
</dbReference>
<dbReference type="GO" id="GO:0030900">
    <property type="term" value="P:forebrain development"/>
    <property type="evidence" value="ECO:0007669"/>
    <property type="project" value="Ensembl"/>
</dbReference>
<dbReference type="GO" id="GO:0007229">
    <property type="term" value="P:integrin-mediated signaling pathway"/>
    <property type="evidence" value="ECO:0007669"/>
    <property type="project" value="Ensembl"/>
</dbReference>
<dbReference type="GO" id="GO:0002282">
    <property type="term" value="P:microglial cell activation involved in immune response"/>
    <property type="evidence" value="ECO:0007669"/>
    <property type="project" value="Ensembl"/>
</dbReference>
<dbReference type="GO" id="GO:0002228">
    <property type="term" value="P:natural killer cell mediated immunity"/>
    <property type="evidence" value="ECO:0007669"/>
    <property type="project" value="Ensembl"/>
</dbReference>
<dbReference type="GO" id="GO:0030889">
    <property type="term" value="P:negative regulation of B cell proliferation"/>
    <property type="evidence" value="ECO:0007669"/>
    <property type="project" value="Ensembl"/>
</dbReference>
<dbReference type="GO" id="GO:0032693">
    <property type="term" value="P:negative regulation of interleukin-10 production"/>
    <property type="evidence" value="ECO:0007669"/>
    <property type="project" value="Ensembl"/>
</dbReference>
<dbReference type="GO" id="GO:1900272">
    <property type="term" value="P:negative regulation of long-term synaptic potentiation"/>
    <property type="evidence" value="ECO:0007669"/>
    <property type="project" value="Ensembl"/>
</dbReference>
<dbReference type="GO" id="GO:0032911">
    <property type="term" value="P:negative regulation of transforming growth factor beta1 production"/>
    <property type="evidence" value="ECO:0007669"/>
    <property type="project" value="Ensembl"/>
</dbReference>
<dbReference type="GO" id="GO:0032480">
    <property type="term" value="P:negative regulation of type I interferon production"/>
    <property type="evidence" value="ECO:0007669"/>
    <property type="project" value="Ensembl"/>
</dbReference>
<dbReference type="GO" id="GO:0002283">
    <property type="term" value="P:neutrophil activation involved in immune response"/>
    <property type="evidence" value="ECO:0007669"/>
    <property type="project" value="Ensembl"/>
</dbReference>
<dbReference type="GO" id="GO:0030316">
    <property type="term" value="P:osteoclast differentiation"/>
    <property type="evidence" value="ECO:0007669"/>
    <property type="project" value="Ensembl"/>
</dbReference>
<dbReference type="GO" id="GO:0032731">
    <property type="term" value="P:positive regulation of interleukin-1 beta production"/>
    <property type="evidence" value="ECO:0007669"/>
    <property type="project" value="Ensembl"/>
</dbReference>
<dbReference type="GO" id="GO:0032755">
    <property type="term" value="P:positive regulation of interleukin-6 production"/>
    <property type="evidence" value="ECO:0007669"/>
    <property type="project" value="Ensembl"/>
</dbReference>
<dbReference type="GO" id="GO:0034241">
    <property type="term" value="P:positive regulation of macrophage fusion"/>
    <property type="evidence" value="ECO:0007669"/>
    <property type="project" value="Ensembl"/>
</dbReference>
<dbReference type="GO" id="GO:1904151">
    <property type="term" value="P:positive regulation of microglial cell mediated cytotoxicity"/>
    <property type="evidence" value="ECO:0007669"/>
    <property type="project" value="Ensembl"/>
</dbReference>
<dbReference type="GO" id="GO:0032816">
    <property type="term" value="P:positive regulation of natural killer cell activation"/>
    <property type="evidence" value="ECO:0007669"/>
    <property type="project" value="Ensembl"/>
</dbReference>
<dbReference type="GO" id="GO:2001206">
    <property type="term" value="P:positive regulation of osteoclast development"/>
    <property type="evidence" value="ECO:0007669"/>
    <property type="project" value="Ensembl"/>
</dbReference>
<dbReference type="GO" id="GO:2000010">
    <property type="term" value="P:positive regulation of protein localization to cell surface"/>
    <property type="evidence" value="ECO:0007669"/>
    <property type="project" value="Ensembl"/>
</dbReference>
<dbReference type="GO" id="GO:1902685">
    <property type="term" value="P:positive regulation of receptor localization to synapse"/>
    <property type="evidence" value="ECO:0007669"/>
    <property type="project" value="Ensembl"/>
</dbReference>
<dbReference type="GO" id="GO:0032930">
    <property type="term" value="P:positive regulation of superoxide anion generation"/>
    <property type="evidence" value="ECO:0007669"/>
    <property type="project" value="Ensembl"/>
</dbReference>
<dbReference type="GO" id="GO:0032760">
    <property type="term" value="P:positive regulation of tumor necrosis factor production"/>
    <property type="evidence" value="ECO:0007669"/>
    <property type="project" value="Ensembl"/>
</dbReference>
<dbReference type="GO" id="GO:0050821">
    <property type="term" value="P:protein stabilization"/>
    <property type="evidence" value="ECO:0007669"/>
    <property type="project" value="Ensembl"/>
</dbReference>
<dbReference type="GO" id="GO:0048678">
    <property type="term" value="P:response to axon injury"/>
    <property type="evidence" value="ECO:0007669"/>
    <property type="project" value="Ensembl"/>
</dbReference>
<dbReference type="GO" id="GO:0071526">
    <property type="term" value="P:semaphorin-plexin signaling pathway"/>
    <property type="evidence" value="ECO:0000250"/>
    <property type="project" value="UniProtKB"/>
</dbReference>
<dbReference type="GO" id="GO:0002223">
    <property type="term" value="P:stimulatory C-type lectin receptor signaling pathway"/>
    <property type="evidence" value="ECO:0000250"/>
    <property type="project" value="UniProtKB"/>
</dbReference>
<dbReference type="GO" id="GO:0002222">
    <property type="term" value="P:stimulatory killer cell immunoglobulin-like receptor signaling pathway"/>
    <property type="evidence" value="ECO:0000250"/>
    <property type="project" value="UniProtKB"/>
</dbReference>
<dbReference type="GO" id="GO:0002291">
    <property type="term" value="P:T cell activation via T cell receptor contact with antigen bound to MHC molecule on antigen presenting cell"/>
    <property type="evidence" value="ECO:0000250"/>
    <property type="project" value="UniProtKB"/>
</dbReference>
<dbReference type="FunFam" id="1.10.287.770:FF:000004">
    <property type="entry name" value="TYRO protein tyrosine kinase-binding protein"/>
    <property type="match status" value="1"/>
</dbReference>
<dbReference type="Gene3D" id="1.10.287.770">
    <property type="entry name" value="YojJ-like"/>
    <property type="match status" value="1"/>
</dbReference>
<dbReference type="InterPro" id="IPR026200">
    <property type="entry name" value="Tyrobp"/>
</dbReference>
<dbReference type="PANTHER" id="PTHR17554">
    <property type="entry name" value="TYRO PROTEIN TYROSINE KINASE-BINDING PROTEIN"/>
    <property type="match status" value="1"/>
</dbReference>
<dbReference type="PANTHER" id="PTHR17554:SF2">
    <property type="entry name" value="TYRO PROTEIN TYROSINE KINASE-BINDING PROTEIN"/>
    <property type="match status" value="1"/>
</dbReference>
<keyword id="KW-0106">Calcium</keyword>
<keyword id="KW-1003">Cell membrane</keyword>
<keyword id="KW-1015">Disulfide bond</keyword>
<keyword id="KW-0391">Immunity</keyword>
<keyword id="KW-0472">Membrane</keyword>
<keyword id="KW-0479">Metal-binding</keyword>
<keyword id="KW-0597">Phosphoprotein</keyword>
<keyword id="KW-1185">Reference proteome</keyword>
<keyword id="KW-0732">Signal</keyword>
<keyword id="KW-0812">Transmembrane</keyword>
<keyword id="KW-1133">Transmembrane helix</keyword>
<organism>
    <name type="scientific">Sus scrofa</name>
    <name type="common">Pig</name>
    <dbReference type="NCBI Taxonomy" id="9823"/>
    <lineage>
        <taxon>Eukaryota</taxon>
        <taxon>Metazoa</taxon>
        <taxon>Chordata</taxon>
        <taxon>Craniata</taxon>
        <taxon>Vertebrata</taxon>
        <taxon>Euteleostomi</taxon>
        <taxon>Mammalia</taxon>
        <taxon>Eutheria</taxon>
        <taxon>Laurasiatheria</taxon>
        <taxon>Artiodactyla</taxon>
        <taxon>Suina</taxon>
        <taxon>Suidae</taxon>
        <taxon>Sus</taxon>
    </lineage>
</organism>
<name>TYOBP_PIG</name>
<reference key="1">
    <citation type="journal article" date="2000" name="Immunogenetics">
        <title>Molecular cloning, gene structure, and expression pattern of pig immunoreceptor DAP12.</title>
        <authorList>
            <person name="Yim D."/>
            <person name="Jie H.-B."/>
            <person name="Lanier L.L."/>
            <person name="Kim Y.B."/>
        </authorList>
    </citation>
    <scope>NUCLEOTIDE SEQUENCE [GENOMIC DNA / MRNA]</scope>
    <scope>TISSUE SPECIFICITY</scope>
    <source>
        <strain>Minnesota miniature</strain>
        <tissue>Peripheral blood leukocyte</tissue>
    </source>
</reference>
<protein>
    <recommendedName>
        <fullName evidence="1">TYRO protein tyrosine kinase-binding protein</fullName>
    </recommendedName>
    <alternativeName>
        <fullName evidence="5">DNAX-activation protein 12</fullName>
    </alternativeName>
</protein>
<sequence length="108" mass="11617">MGRLGPSNGLLPLLLAVGGFSLVQAQRECSCSAVSPGILAGIVLGDLVLTLLIALAVYSLGRLVPRTRGAVDVTRKQHIAETESAYQELQGQRSDVYSDLNTQRQYYK</sequence>
<gene>
    <name evidence="1" type="primary">TYROBP</name>
    <name evidence="5" type="synonym">DAP12</name>
</gene>
<comment type="function">
    <text evidence="1 2">Adapter protein which non-covalently associates with activating receptors found on the surface of a variety of immune cells to mediate signaling and cell activation following ligand binding by the receptors (By similarity). TYROBP is tyrosine-phosphorylated in the ITAM domain following ligand binding by the associated receptors which leads to activation of additional tyrosine kinases and subsequent cell activation (By similarity). Also has an inhibitory role in some cells (By similarity). Non-covalently associates with activating receptors of the CD300 family to mediate cell activation (By similarity). Also mediates cell activation through association with activating receptors of the CD200R family (By similarity). Required for neutrophil activation mediated by integrin (By similarity). Required for the activation of myeloid cells mediated by the CLEC5A/MDL1 receptor (By similarity). Associates with natural killer (NK) cell receptors such as the KLRD1/KLRC2 heterodimer to mediate NK cell activation (By similarity). Associates with TREM1 to mediate activation of neutrophils and monocytes (By similarity). Associates with TREM2 on monocyte-derived dendritic cells to mediate up-regulation of chemokine receptor CCR7 and dendritic cell maturation and survival (By similarity). Association with TREM2 mediates cytokine-induced formation of multinucleated giant cells which are formed by the fusion of macrophages (By similarity). Stabilizes the TREM2 C-terminal fragment (TREM2-CTF) produced by TREM2 ectodomain shedding which suppresses the release of pro-inflammatory cytokines (By similarity). In microglia, required with TREM2 for phagocytosis of apoptotic neurons (By similarity). Required with ITGAM/CD11B in microglia to control production of microglial superoxide ions which promote the neuronal apoptosis that occurs during brain development (By similarity). Promotes pro-inflammatory responses in microglia following nerve injury which accelerates degeneration of injured neurons (By similarity). Positively regulates the expression of the IRAK3/IRAK-M kinase and IL10 production by liver dendritic cells and inhibits their T cell allosimulatory ability (By similarity). Negatively regulates B cell proliferation (By similarity). Required for CSF1-mediated osteoclast cytoskeletal organization (By similarity). Positively regulates multinucleation during osteoclast development (By similarity).</text>
</comment>
<comment type="subunit">
    <text evidence="1 2">Homodimer; disulfide-linked (By similarity). Homotrimer; disulfide-linked (By similarity). Homotetramer; disulfide-linked (By similarity). Homotrimers and homotetramers form when low levels of partner receptors are available and is competitive with assembly with interacting receptors (By similarity). They may represent alternative oligomerization states or may be intermediates in the receptor assembly process (By similarity). Binding of a metal cation aids in homooligomerization through coordination of the metal ion by the subunits of the oligomer (By similarity). Interacts with TREM1 (By similarity). Interacts with TREM2 (By similarity). Interacts with CLECSF5 (By similarity). Interacts with CD300LB and CD300C2 (By similarity). Interacts with CD300E (By similarity). Interacts (via ITAM domain) with SYK (via SH2 domains); activates SYK mediating neutrophils and macrophages integrin-mediated activation (By similarity). Interacts with KLRC2 (By similarity). Interacts with CD300H (By similarity). Interacts with KLRD1 (By similarity). Interacts with SIGLEC1 (By similarity).</text>
</comment>
<comment type="subcellular location">
    <subcellularLocation>
        <location evidence="1">Cell membrane</location>
        <topology evidence="3">Single-pass type I membrane protein</topology>
    </subcellularLocation>
</comment>
<comment type="tissue specificity">
    <text evidence="4">Highly expressed in spleen, liver and thymus. Weakly expressed in lymph nodes. Expressed in peripheral blood leukocytes, granulocytes, macrophages, and monocytes. LPS does not increase expression in granulocytes.</text>
</comment>
<comment type="PTM">
    <text evidence="1">Following ligand binding by associated receptors, tyrosine phosphorylated in the ITAM domain which leads to activation of additional tyrosine kinases and subsequent cell activation.</text>
</comment>
<comment type="similarity">
    <text evidence="6">Belongs to the TYROBP family.</text>
</comment>
<feature type="signal peptide" evidence="3">
    <location>
        <begin position="1"/>
        <end position="25"/>
    </location>
</feature>
<feature type="chain" id="PRO_0000022606" description="TYRO protein tyrosine kinase-binding protein">
    <location>
        <begin position="26"/>
        <end position="108"/>
    </location>
</feature>
<feature type="topological domain" description="Extracellular" evidence="1">
    <location>
        <begin position="26"/>
        <end position="36"/>
    </location>
</feature>
<feature type="transmembrane region" description="Helical" evidence="1">
    <location>
        <begin position="37"/>
        <end position="57"/>
    </location>
</feature>
<feature type="topological domain" description="Cytoplasmic" evidence="1">
    <location>
        <begin position="58"/>
        <end position="108"/>
    </location>
</feature>
<feature type="domain" description="ITAM">
    <location>
        <begin position="75"/>
        <end position="103"/>
    </location>
</feature>
<feature type="binding site" evidence="1">
    <location>
        <position position="46"/>
    </location>
    <ligand>
        <name>Ca(2+)</name>
        <dbReference type="ChEBI" id="CHEBI:29108"/>
        <note>ligand shared between two neighboring subunits in homooligomer</note>
    </ligand>
</feature>
<feature type="site" description="Important for interaction with transmembrane receptors" evidence="1">
    <location>
        <position position="50"/>
    </location>
</feature>
<feature type="modified residue" description="Phosphotyrosine" evidence="2">
    <location>
        <position position="86"/>
    </location>
</feature>
<feature type="modified residue" description="Phosphotyrosine" evidence="2">
    <location>
        <position position="97"/>
    </location>
</feature>
<feature type="disulfide bond" description="Interchain" evidence="1">
    <location>
        <position position="31"/>
    </location>
</feature>
<evidence type="ECO:0000250" key="1">
    <source>
        <dbReference type="UniProtKB" id="O43914"/>
    </source>
</evidence>
<evidence type="ECO:0000250" key="2">
    <source>
        <dbReference type="UniProtKB" id="O54885"/>
    </source>
</evidence>
<evidence type="ECO:0000255" key="3"/>
<evidence type="ECO:0000269" key="4">
    <source>
    </source>
</evidence>
<evidence type="ECO:0000303" key="5">
    <source>
    </source>
</evidence>
<evidence type="ECO:0000305" key="6"/>
<accession>Q9TU45</accession>